<sequence length="47" mass="5618">MPFEEAMKRLFMKKICMRCNARNPWRATKCRKCGYKGLRPKAKEPRG</sequence>
<gene>
    <name evidence="1" type="primary">rpl40e</name>
    <name type="ordered locus">MJ0707</name>
</gene>
<comment type="similarity">
    <text evidence="1">Belongs to the eukaryotic ribosomal protein eL40 family.</text>
</comment>
<protein>
    <recommendedName>
        <fullName evidence="1">Large ribosomal subunit protein eL40</fullName>
    </recommendedName>
    <alternativeName>
        <fullName evidence="2">50S ribosomal protein L40e</fullName>
    </alternativeName>
</protein>
<keyword id="KW-1185">Reference proteome</keyword>
<keyword id="KW-0687">Ribonucleoprotein</keyword>
<keyword id="KW-0689">Ribosomal protein</keyword>
<dbReference type="EMBL" id="L77117">
    <property type="protein sequence ID" value="AAB98701.1"/>
    <property type="molecule type" value="Genomic_DNA"/>
</dbReference>
<dbReference type="PIR" id="C64388">
    <property type="entry name" value="C64388"/>
</dbReference>
<dbReference type="RefSeq" id="WP_010870213.1">
    <property type="nucleotide sequence ID" value="NC_000909.1"/>
</dbReference>
<dbReference type="SMR" id="P54058"/>
<dbReference type="FunCoup" id="P54058">
    <property type="interactions" value="67"/>
</dbReference>
<dbReference type="STRING" id="243232.MJ_0707"/>
<dbReference type="PaxDb" id="243232-MJ_0707"/>
<dbReference type="EnsemblBacteria" id="AAB98701">
    <property type="protein sequence ID" value="AAB98701"/>
    <property type="gene ID" value="MJ_0707"/>
</dbReference>
<dbReference type="GeneID" id="65883665"/>
<dbReference type="KEGG" id="mja:MJ_0707"/>
<dbReference type="eggNOG" id="arCOG04049">
    <property type="taxonomic scope" value="Archaea"/>
</dbReference>
<dbReference type="HOGENOM" id="CLU_205640_0_0_2"/>
<dbReference type="InParanoid" id="P54058"/>
<dbReference type="OrthoDB" id="45138at2157"/>
<dbReference type="PhylomeDB" id="P54058"/>
<dbReference type="Proteomes" id="UP000000805">
    <property type="component" value="Chromosome"/>
</dbReference>
<dbReference type="GO" id="GO:1990904">
    <property type="term" value="C:ribonucleoprotein complex"/>
    <property type="evidence" value="ECO:0007669"/>
    <property type="project" value="UniProtKB-KW"/>
</dbReference>
<dbReference type="GO" id="GO:0005840">
    <property type="term" value="C:ribosome"/>
    <property type="evidence" value="ECO:0007669"/>
    <property type="project" value="UniProtKB-KW"/>
</dbReference>
<dbReference type="GO" id="GO:0003735">
    <property type="term" value="F:structural constituent of ribosome"/>
    <property type="evidence" value="ECO:0007669"/>
    <property type="project" value="InterPro"/>
</dbReference>
<dbReference type="GO" id="GO:0006412">
    <property type="term" value="P:translation"/>
    <property type="evidence" value="ECO:0007669"/>
    <property type="project" value="UniProtKB-UniRule"/>
</dbReference>
<dbReference type="Gene3D" id="4.10.1060.50">
    <property type="match status" value="1"/>
</dbReference>
<dbReference type="HAMAP" id="MF_00788">
    <property type="entry name" value="Ribosomal_eL40"/>
    <property type="match status" value="1"/>
</dbReference>
<dbReference type="InterPro" id="IPR023657">
    <property type="entry name" value="Ribosomal_eL40_arc"/>
</dbReference>
<dbReference type="InterPro" id="IPR001975">
    <property type="entry name" value="Ribosomal_eL40_dom"/>
</dbReference>
<dbReference type="InterPro" id="IPR038587">
    <property type="entry name" value="Ribosomal_eL40_sf"/>
</dbReference>
<dbReference type="InterPro" id="IPR011332">
    <property type="entry name" value="Ribosomal_zn-bd"/>
</dbReference>
<dbReference type="NCBIfam" id="NF003161">
    <property type="entry name" value="PRK04136.1"/>
    <property type="match status" value="1"/>
</dbReference>
<dbReference type="PANTHER" id="PTHR39649">
    <property type="entry name" value="50S RIBOSOMAL PROTEIN L40E"/>
    <property type="match status" value="1"/>
</dbReference>
<dbReference type="PANTHER" id="PTHR39649:SF1">
    <property type="entry name" value="LARGE RIBOSOMAL SUBUNIT PROTEIN EL40"/>
    <property type="match status" value="1"/>
</dbReference>
<dbReference type="Pfam" id="PF01020">
    <property type="entry name" value="Ribosomal_L40e"/>
    <property type="match status" value="1"/>
</dbReference>
<dbReference type="SMART" id="SM01377">
    <property type="entry name" value="Ribosomal_L40e"/>
    <property type="match status" value="1"/>
</dbReference>
<dbReference type="SUPFAM" id="SSF57829">
    <property type="entry name" value="Zn-binding ribosomal proteins"/>
    <property type="match status" value="1"/>
</dbReference>
<feature type="chain" id="PRO_0000138781" description="Large ribosomal subunit protein eL40">
    <location>
        <begin position="1"/>
        <end position="47"/>
    </location>
</feature>
<organism>
    <name type="scientific">Methanocaldococcus jannaschii (strain ATCC 43067 / DSM 2661 / JAL-1 / JCM 10045 / NBRC 100440)</name>
    <name type="common">Methanococcus jannaschii</name>
    <dbReference type="NCBI Taxonomy" id="243232"/>
    <lineage>
        <taxon>Archaea</taxon>
        <taxon>Methanobacteriati</taxon>
        <taxon>Methanobacteriota</taxon>
        <taxon>Methanomada group</taxon>
        <taxon>Methanococci</taxon>
        <taxon>Methanococcales</taxon>
        <taxon>Methanocaldococcaceae</taxon>
        <taxon>Methanocaldococcus</taxon>
    </lineage>
</organism>
<name>RL40_METJA</name>
<accession>P54058</accession>
<reference key="1">
    <citation type="journal article" date="1996" name="Science">
        <title>Complete genome sequence of the methanogenic archaeon, Methanococcus jannaschii.</title>
        <authorList>
            <person name="Bult C.J."/>
            <person name="White O."/>
            <person name="Olsen G.J."/>
            <person name="Zhou L."/>
            <person name="Fleischmann R.D."/>
            <person name="Sutton G.G."/>
            <person name="Blake J.A."/>
            <person name="FitzGerald L.M."/>
            <person name="Clayton R.A."/>
            <person name="Gocayne J.D."/>
            <person name="Kerlavage A.R."/>
            <person name="Dougherty B.A."/>
            <person name="Tomb J.-F."/>
            <person name="Adams M.D."/>
            <person name="Reich C.I."/>
            <person name="Overbeek R."/>
            <person name="Kirkness E.F."/>
            <person name="Weinstock K.G."/>
            <person name="Merrick J.M."/>
            <person name="Glodek A."/>
            <person name="Scott J.L."/>
            <person name="Geoghagen N.S.M."/>
            <person name="Weidman J.F."/>
            <person name="Fuhrmann J.L."/>
            <person name="Nguyen D."/>
            <person name="Utterback T.R."/>
            <person name="Kelley J.M."/>
            <person name="Peterson J.D."/>
            <person name="Sadow P.W."/>
            <person name="Hanna M.C."/>
            <person name="Cotton M.D."/>
            <person name="Roberts K.M."/>
            <person name="Hurst M.A."/>
            <person name="Kaine B.P."/>
            <person name="Borodovsky M."/>
            <person name="Klenk H.-P."/>
            <person name="Fraser C.M."/>
            <person name="Smith H.O."/>
            <person name="Woese C.R."/>
            <person name="Venter J.C."/>
        </authorList>
    </citation>
    <scope>NUCLEOTIDE SEQUENCE [LARGE SCALE GENOMIC DNA]</scope>
    <source>
        <strain>ATCC 43067 / DSM 2661 / JAL-1 / JCM 10045 / NBRC 100440</strain>
    </source>
</reference>
<proteinExistence type="inferred from homology"/>
<evidence type="ECO:0000255" key="1">
    <source>
        <dbReference type="HAMAP-Rule" id="MF_00788"/>
    </source>
</evidence>
<evidence type="ECO:0000305" key="2"/>